<comment type="function">
    <text evidence="1">Catalyzes the methylthiolation of N6-(dimethylallyl)adenosine (i(6)A), leading to the formation of 2-methylthio-N6-(dimethylallyl)adenosine (ms(2)i(6)A) at position 37 in tRNAs that read codons beginning with uridine.</text>
</comment>
<comment type="catalytic activity">
    <reaction evidence="1">
        <text>N(6)-dimethylallyladenosine(37) in tRNA + (sulfur carrier)-SH + AH2 + 2 S-adenosyl-L-methionine = 2-methylsulfanyl-N(6)-dimethylallyladenosine(37) in tRNA + (sulfur carrier)-H + 5'-deoxyadenosine + L-methionine + A + S-adenosyl-L-homocysteine + 2 H(+)</text>
        <dbReference type="Rhea" id="RHEA:37067"/>
        <dbReference type="Rhea" id="RHEA-COMP:10375"/>
        <dbReference type="Rhea" id="RHEA-COMP:10376"/>
        <dbReference type="Rhea" id="RHEA-COMP:14737"/>
        <dbReference type="Rhea" id="RHEA-COMP:14739"/>
        <dbReference type="ChEBI" id="CHEBI:13193"/>
        <dbReference type="ChEBI" id="CHEBI:15378"/>
        <dbReference type="ChEBI" id="CHEBI:17319"/>
        <dbReference type="ChEBI" id="CHEBI:17499"/>
        <dbReference type="ChEBI" id="CHEBI:29917"/>
        <dbReference type="ChEBI" id="CHEBI:57844"/>
        <dbReference type="ChEBI" id="CHEBI:57856"/>
        <dbReference type="ChEBI" id="CHEBI:59789"/>
        <dbReference type="ChEBI" id="CHEBI:64428"/>
        <dbReference type="ChEBI" id="CHEBI:74415"/>
        <dbReference type="ChEBI" id="CHEBI:74417"/>
        <dbReference type="EC" id="2.8.4.3"/>
    </reaction>
</comment>
<comment type="cofactor">
    <cofactor evidence="1">
        <name>[4Fe-4S] cluster</name>
        <dbReference type="ChEBI" id="CHEBI:49883"/>
    </cofactor>
    <text evidence="1">Binds 2 [4Fe-4S] clusters. One cluster is coordinated with 3 cysteines and an exchangeable S-adenosyl-L-methionine.</text>
</comment>
<comment type="subunit">
    <text evidence="1">Monomer.</text>
</comment>
<comment type="subcellular location">
    <subcellularLocation>
        <location evidence="1">Cytoplasm</location>
    </subcellularLocation>
</comment>
<comment type="similarity">
    <text evidence="1">Belongs to the methylthiotransferase family. MiaB subfamily.</text>
</comment>
<sequence>MTKKLHIKTWGCQMNEYDSSKMADLLDATHGYQLTDVAEEADVLLLNTCSIREKAQEKVFHQLGRWKLLKEKNPDLIIGVGGCVASQEGEHIRQRAHYVDIIFGPQTLHRLPEMINSVRGDRSPVVDISFPEIEKFDRLPEPRAEGPTAFVSIMEGCNKYCTYCVVPYTRGEEVSRPSDDILFEIAQLAAQGVREVNLLGQNVNAWRGENYDGTTGSFADLLRLVAAIDGIDRIRFTTSHPIEFTDDIIEVYRDTPELVSFLHLPVQSGSDRILNLMGRTHTALEYKAIIRKLRAARPDIQISSDFIVGFPGETTEDFEKTMKLIADVNFDMSYSFIFSARPGTPAADMVDDVPEEEKKQRLYILQERINQQAMAWSRRMLGTTQRILVEGTSRKSIMELSGRTENNRVVNFEGTPDMIGKFVDVEITDVYPNSLRGKVVRTEDEMGLRVAETPESVIARTRKENDLGVGYYQP</sequence>
<gene>
    <name evidence="1" type="primary">miaB</name>
    <name type="ordered locus">EcSMS35_0684</name>
</gene>
<accession>B1LLB3</accession>
<organism>
    <name type="scientific">Escherichia coli (strain SMS-3-5 / SECEC)</name>
    <dbReference type="NCBI Taxonomy" id="439855"/>
    <lineage>
        <taxon>Bacteria</taxon>
        <taxon>Pseudomonadati</taxon>
        <taxon>Pseudomonadota</taxon>
        <taxon>Gammaproteobacteria</taxon>
        <taxon>Enterobacterales</taxon>
        <taxon>Enterobacteriaceae</taxon>
        <taxon>Escherichia</taxon>
    </lineage>
</organism>
<keyword id="KW-0004">4Fe-4S</keyword>
<keyword id="KW-0963">Cytoplasm</keyword>
<keyword id="KW-0408">Iron</keyword>
<keyword id="KW-0411">Iron-sulfur</keyword>
<keyword id="KW-0479">Metal-binding</keyword>
<keyword id="KW-0949">S-adenosyl-L-methionine</keyword>
<keyword id="KW-0808">Transferase</keyword>
<keyword id="KW-0819">tRNA processing</keyword>
<proteinExistence type="inferred from homology"/>
<reference key="1">
    <citation type="journal article" date="2008" name="J. Bacteriol.">
        <title>Insights into the environmental resistance gene pool from the genome sequence of the multidrug-resistant environmental isolate Escherichia coli SMS-3-5.</title>
        <authorList>
            <person name="Fricke W.F."/>
            <person name="Wright M.S."/>
            <person name="Lindell A.H."/>
            <person name="Harkins D.M."/>
            <person name="Baker-Austin C."/>
            <person name="Ravel J."/>
            <person name="Stepanauskas R."/>
        </authorList>
    </citation>
    <scope>NUCLEOTIDE SEQUENCE [LARGE SCALE GENOMIC DNA]</scope>
    <source>
        <strain>SMS-3-5 / SECEC</strain>
    </source>
</reference>
<dbReference type="EC" id="2.8.4.3" evidence="1"/>
<dbReference type="EMBL" id="CP000970">
    <property type="protein sequence ID" value="ACB15808.1"/>
    <property type="molecule type" value="Genomic_DNA"/>
</dbReference>
<dbReference type="RefSeq" id="WP_000162740.1">
    <property type="nucleotide sequence ID" value="NC_010498.1"/>
</dbReference>
<dbReference type="SMR" id="B1LLB3"/>
<dbReference type="GeneID" id="86863171"/>
<dbReference type="KEGG" id="ecm:EcSMS35_0684"/>
<dbReference type="HOGENOM" id="CLU_018697_2_0_6"/>
<dbReference type="Proteomes" id="UP000007011">
    <property type="component" value="Chromosome"/>
</dbReference>
<dbReference type="GO" id="GO:0005829">
    <property type="term" value="C:cytosol"/>
    <property type="evidence" value="ECO:0007669"/>
    <property type="project" value="TreeGrafter"/>
</dbReference>
<dbReference type="GO" id="GO:0051539">
    <property type="term" value="F:4 iron, 4 sulfur cluster binding"/>
    <property type="evidence" value="ECO:0007669"/>
    <property type="project" value="UniProtKB-UniRule"/>
</dbReference>
<dbReference type="GO" id="GO:0046872">
    <property type="term" value="F:metal ion binding"/>
    <property type="evidence" value="ECO:0007669"/>
    <property type="project" value="UniProtKB-KW"/>
</dbReference>
<dbReference type="GO" id="GO:0035597">
    <property type="term" value="F:N6-isopentenyladenosine methylthiotransferase activity"/>
    <property type="evidence" value="ECO:0007669"/>
    <property type="project" value="TreeGrafter"/>
</dbReference>
<dbReference type="CDD" id="cd01335">
    <property type="entry name" value="Radical_SAM"/>
    <property type="match status" value="1"/>
</dbReference>
<dbReference type="FunFam" id="3.40.50.12160:FF:000001">
    <property type="entry name" value="tRNA-2-methylthio-N(6)-dimethylallyladenosine synthase"/>
    <property type="match status" value="1"/>
</dbReference>
<dbReference type="FunFam" id="3.80.30.20:FF:000001">
    <property type="entry name" value="tRNA-2-methylthio-N(6)-dimethylallyladenosine synthase 2"/>
    <property type="match status" value="1"/>
</dbReference>
<dbReference type="Gene3D" id="3.40.50.12160">
    <property type="entry name" value="Methylthiotransferase, N-terminal domain"/>
    <property type="match status" value="1"/>
</dbReference>
<dbReference type="Gene3D" id="3.80.30.20">
    <property type="entry name" value="tm_1862 like domain"/>
    <property type="match status" value="1"/>
</dbReference>
<dbReference type="HAMAP" id="MF_01864">
    <property type="entry name" value="tRNA_metthiotr_MiaB"/>
    <property type="match status" value="1"/>
</dbReference>
<dbReference type="InterPro" id="IPR006638">
    <property type="entry name" value="Elp3/MiaA/NifB-like_rSAM"/>
</dbReference>
<dbReference type="InterPro" id="IPR005839">
    <property type="entry name" value="Methylthiotransferase"/>
</dbReference>
<dbReference type="InterPro" id="IPR020612">
    <property type="entry name" value="Methylthiotransferase_CS"/>
</dbReference>
<dbReference type="InterPro" id="IPR013848">
    <property type="entry name" value="Methylthiotransferase_N"/>
</dbReference>
<dbReference type="InterPro" id="IPR038135">
    <property type="entry name" value="Methylthiotransferase_N_sf"/>
</dbReference>
<dbReference type="InterPro" id="IPR006463">
    <property type="entry name" value="MiaB_methiolase"/>
</dbReference>
<dbReference type="InterPro" id="IPR007197">
    <property type="entry name" value="rSAM"/>
</dbReference>
<dbReference type="InterPro" id="IPR023404">
    <property type="entry name" value="rSAM_horseshoe"/>
</dbReference>
<dbReference type="InterPro" id="IPR002792">
    <property type="entry name" value="TRAM_dom"/>
</dbReference>
<dbReference type="NCBIfam" id="TIGR01574">
    <property type="entry name" value="miaB-methiolase"/>
    <property type="match status" value="1"/>
</dbReference>
<dbReference type="NCBIfam" id="TIGR00089">
    <property type="entry name" value="MiaB/RimO family radical SAM methylthiotransferase"/>
    <property type="match status" value="1"/>
</dbReference>
<dbReference type="PANTHER" id="PTHR43020">
    <property type="entry name" value="CDK5 REGULATORY SUBUNIT-ASSOCIATED PROTEIN 1"/>
    <property type="match status" value="1"/>
</dbReference>
<dbReference type="PANTHER" id="PTHR43020:SF2">
    <property type="entry name" value="MITOCHONDRIAL TRNA METHYLTHIOTRANSFERASE CDK5RAP1"/>
    <property type="match status" value="1"/>
</dbReference>
<dbReference type="Pfam" id="PF04055">
    <property type="entry name" value="Radical_SAM"/>
    <property type="match status" value="1"/>
</dbReference>
<dbReference type="Pfam" id="PF01938">
    <property type="entry name" value="TRAM"/>
    <property type="match status" value="1"/>
</dbReference>
<dbReference type="Pfam" id="PF00919">
    <property type="entry name" value="UPF0004"/>
    <property type="match status" value="1"/>
</dbReference>
<dbReference type="SFLD" id="SFLDF00273">
    <property type="entry name" value="(dimethylallyl)adenosine_tRNA"/>
    <property type="match status" value="1"/>
</dbReference>
<dbReference type="SFLD" id="SFLDG01082">
    <property type="entry name" value="B12-binding_domain_containing"/>
    <property type="match status" value="1"/>
</dbReference>
<dbReference type="SFLD" id="SFLDS00029">
    <property type="entry name" value="Radical_SAM"/>
    <property type="match status" value="1"/>
</dbReference>
<dbReference type="SMART" id="SM00729">
    <property type="entry name" value="Elp3"/>
    <property type="match status" value="1"/>
</dbReference>
<dbReference type="SUPFAM" id="SSF102114">
    <property type="entry name" value="Radical SAM enzymes"/>
    <property type="match status" value="1"/>
</dbReference>
<dbReference type="PROSITE" id="PS51449">
    <property type="entry name" value="MTTASE_N"/>
    <property type="match status" value="1"/>
</dbReference>
<dbReference type="PROSITE" id="PS01278">
    <property type="entry name" value="MTTASE_RADICAL"/>
    <property type="match status" value="1"/>
</dbReference>
<dbReference type="PROSITE" id="PS51918">
    <property type="entry name" value="RADICAL_SAM"/>
    <property type="match status" value="1"/>
</dbReference>
<dbReference type="PROSITE" id="PS50926">
    <property type="entry name" value="TRAM"/>
    <property type="match status" value="1"/>
</dbReference>
<feature type="chain" id="PRO_0000374285" description="tRNA-2-methylthio-N(6)-dimethylallyladenosine synthase">
    <location>
        <begin position="1"/>
        <end position="474"/>
    </location>
</feature>
<feature type="domain" description="MTTase N-terminal" evidence="1">
    <location>
        <begin position="3"/>
        <end position="120"/>
    </location>
</feature>
<feature type="domain" description="Radical SAM core" evidence="2">
    <location>
        <begin position="143"/>
        <end position="375"/>
    </location>
</feature>
<feature type="domain" description="TRAM" evidence="1">
    <location>
        <begin position="378"/>
        <end position="441"/>
    </location>
</feature>
<feature type="binding site" evidence="1">
    <location>
        <position position="12"/>
    </location>
    <ligand>
        <name>[4Fe-4S] cluster</name>
        <dbReference type="ChEBI" id="CHEBI:49883"/>
        <label>1</label>
    </ligand>
</feature>
<feature type="binding site" evidence="1">
    <location>
        <position position="49"/>
    </location>
    <ligand>
        <name>[4Fe-4S] cluster</name>
        <dbReference type="ChEBI" id="CHEBI:49883"/>
        <label>1</label>
    </ligand>
</feature>
<feature type="binding site" evidence="1">
    <location>
        <position position="83"/>
    </location>
    <ligand>
        <name>[4Fe-4S] cluster</name>
        <dbReference type="ChEBI" id="CHEBI:49883"/>
        <label>1</label>
    </ligand>
</feature>
<feature type="binding site" evidence="1">
    <location>
        <position position="157"/>
    </location>
    <ligand>
        <name>[4Fe-4S] cluster</name>
        <dbReference type="ChEBI" id="CHEBI:49883"/>
        <label>2</label>
        <note>4Fe-4S-S-AdoMet</note>
    </ligand>
</feature>
<feature type="binding site" evidence="1">
    <location>
        <position position="161"/>
    </location>
    <ligand>
        <name>[4Fe-4S] cluster</name>
        <dbReference type="ChEBI" id="CHEBI:49883"/>
        <label>2</label>
        <note>4Fe-4S-S-AdoMet</note>
    </ligand>
</feature>
<feature type="binding site" evidence="1">
    <location>
        <position position="164"/>
    </location>
    <ligand>
        <name>[4Fe-4S] cluster</name>
        <dbReference type="ChEBI" id="CHEBI:49883"/>
        <label>2</label>
        <note>4Fe-4S-S-AdoMet</note>
    </ligand>
</feature>
<name>MIAB_ECOSM</name>
<protein>
    <recommendedName>
        <fullName evidence="1">tRNA-2-methylthio-N(6)-dimethylallyladenosine synthase</fullName>
        <ecNumber evidence="1">2.8.4.3</ecNumber>
    </recommendedName>
    <alternativeName>
        <fullName evidence="1">(Dimethylallyl)adenosine tRNA methylthiotransferase MiaB</fullName>
    </alternativeName>
    <alternativeName>
        <fullName evidence="1">tRNA-i(6)A37 methylthiotransferase</fullName>
    </alternativeName>
</protein>
<evidence type="ECO:0000255" key="1">
    <source>
        <dbReference type="HAMAP-Rule" id="MF_01864"/>
    </source>
</evidence>
<evidence type="ECO:0000255" key="2">
    <source>
        <dbReference type="PROSITE-ProRule" id="PRU01266"/>
    </source>
</evidence>